<reference key="1">
    <citation type="journal article" date="1987" name="J. Mol. Biol.">
        <title>Sequence of a conditionally essential region of bacteriophage T3, including the primary origin of DNA replication.</title>
        <authorList>
            <person name="Schmitt M.P."/>
            <person name="Beck P.J."/>
            <person name="Kearney C.A."/>
            <person name="Spence J.L."/>
            <person name="Digiovanni D."/>
            <person name="Condreay J.P."/>
            <person name="Molineux I.J."/>
        </authorList>
    </citation>
    <scope>NUCLEOTIDE SEQUENCE [GENOMIC DNA]</scope>
    <source>
        <strain>Luria</strain>
    </source>
</reference>
<proteinExistence type="predicted"/>
<feature type="chain" id="PRO_0000106472" description="Uncharacterized gene 1.5 protein">
    <location>
        <begin position="1"/>
        <end position="25"/>
    </location>
</feature>
<name>Y15_BPT3</name>
<accession>P20835</accession>
<dbReference type="EMBL" id="X17255">
    <property type="protein sequence ID" value="CAA35126.1"/>
    <property type="molecule type" value="Genomic_DNA"/>
</dbReference>
<dbReference type="EMBL" id="X05031">
    <property type="protein sequence ID" value="CAA28701.1"/>
    <property type="molecule type" value="Genomic_DNA"/>
</dbReference>
<dbReference type="PIR" id="S09540">
    <property type="entry name" value="S09540"/>
</dbReference>
<dbReference type="RefSeq" id="NP_523306.1">
    <property type="nucleotide sequence ID" value="NC_003298.1"/>
</dbReference>
<dbReference type="KEGG" id="vg:927442"/>
<sequence>MWLILFAIVATLGLMVADDNIWPDC</sequence>
<gene>
    <name type="primary">1.5</name>
</gene>
<organismHost>
    <name type="scientific">Escherichia coli</name>
    <dbReference type="NCBI Taxonomy" id="562"/>
</organismHost>
<protein>
    <recommendedName>
        <fullName>Uncharacterized gene 1.5 protein</fullName>
    </recommendedName>
</protein>
<organism>
    <name type="scientific">Enterobacteria phage T3</name>
    <name type="common">Bacteriophage T3</name>
    <dbReference type="NCBI Taxonomy" id="10759"/>
    <lineage>
        <taxon>Viruses</taxon>
        <taxon>Duplodnaviria</taxon>
        <taxon>Heunggongvirae</taxon>
        <taxon>Uroviricota</taxon>
        <taxon>Caudoviricetes</taxon>
        <taxon>Autographiviridae</taxon>
        <taxon>Studiervirinae</taxon>
        <taxon>Teetrevirus</taxon>
        <taxon>Teetrevirus T3</taxon>
    </lineage>
</organism>